<reference key="1">
    <citation type="journal article" date="2005" name="Proc. Natl. Acad. Sci. U.S.A.">
        <title>The complete genome sequence of Mycobacterium avium subspecies paratuberculosis.</title>
        <authorList>
            <person name="Li L."/>
            <person name="Bannantine J.P."/>
            <person name="Zhang Q."/>
            <person name="Amonsin A."/>
            <person name="May B.J."/>
            <person name="Alt D."/>
            <person name="Banerji N."/>
            <person name="Kanjilal S."/>
            <person name="Kapur V."/>
        </authorList>
    </citation>
    <scope>NUCLEOTIDE SEQUENCE [LARGE SCALE GENOMIC DNA]</scope>
    <source>
        <strain>ATCC BAA-968 / K-10</strain>
    </source>
</reference>
<feature type="chain" id="PRO_0000057645" description="UPF0353 protein MAP_1207">
    <location>
        <begin position="1"/>
        <end position="335"/>
    </location>
</feature>
<feature type="transmembrane region" description="Helical" evidence="1">
    <location>
        <begin position="18"/>
        <end position="38"/>
    </location>
</feature>
<feature type="transmembrane region" description="Helical" evidence="1">
    <location>
        <begin position="67"/>
        <end position="87"/>
    </location>
</feature>
<feature type="transmembrane region" description="Helical" evidence="1">
    <location>
        <begin position="309"/>
        <end position="329"/>
    </location>
</feature>
<feature type="domain" description="VWFA" evidence="1">
    <location>
        <begin position="98"/>
        <end position="294"/>
    </location>
</feature>
<protein>
    <recommendedName>
        <fullName evidence="1">UPF0353 protein MAP_1207</fullName>
    </recommendedName>
</protein>
<accession>Q740Y5</accession>
<dbReference type="EMBL" id="AE016958">
    <property type="protein sequence ID" value="AAS03524.1"/>
    <property type="molecule type" value="Genomic_DNA"/>
</dbReference>
<dbReference type="RefSeq" id="WP_003876099.1">
    <property type="nucleotide sequence ID" value="NZ_CP106873.1"/>
</dbReference>
<dbReference type="SMR" id="Q740Y5"/>
<dbReference type="STRING" id="262316.MAP_1207"/>
<dbReference type="KEGG" id="mpa:MAP_1207"/>
<dbReference type="eggNOG" id="COG2304">
    <property type="taxonomic scope" value="Bacteria"/>
</dbReference>
<dbReference type="HOGENOM" id="CLU_024570_2_0_11"/>
<dbReference type="Proteomes" id="UP000000580">
    <property type="component" value="Chromosome"/>
</dbReference>
<dbReference type="GO" id="GO:0005886">
    <property type="term" value="C:plasma membrane"/>
    <property type="evidence" value="ECO:0007669"/>
    <property type="project" value="UniProtKB-SubCell"/>
</dbReference>
<dbReference type="CDD" id="cd00198">
    <property type="entry name" value="vWFA"/>
    <property type="match status" value="1"/>
</dbReference>
<dbReference type="FunFam" id="3.40.50.410:FF:000078">
    <property type="entry name" value="UPF0353 protein RN09_1826"/>
    <property type="match status" value="1"/>
</dbReference>
<dbReference type="Gene3D" id="3.40.50.410">
    <property type="entry name" value="von Willebrand factor, type A domain"/>
    <property type="match status" value="1"/>
</dbReference>
<dbReference type="HAMAP" id="MF_01340">
    <property type="entry name" value="UPF0353"/>
    <property type="match status" value="1"/>
</dbReference>
<dbReference type="InterPro" id="IPR022933">
    <property type="entry name" value="UPF0353"/>
</dbReference>
<dbReference type="InterPro" id="IPR050768">
    <property type="entry name" value="UPF0353/GerABKA_families"/>
</dbReference>
<dbReference type="InterPro" id="IPR002035">
    <property type="entry name" value="VWF_A"/>
</dbReference>
<dbReference type="InterPro" id="IPR036465">
    <property type="entry name" value="vWFA_dom_sf"/>
</dbReference>
<dbReference type="NCBIfam" id="NF010238">
    <property type="entry name" value="PRK13685.1"/>
    <property type="match status" value="1"/>
</dbReference>
<dbReference type="PANTHER" id="PTHR22550:SF5">
    <property type="entry name" value="LEUCINE ZIPPER PROTEIN 4"/>
    <property type="match status" value="1"/>
</dbReference>
<dbReference type="PANTHER" id="PTHR22550">
    <property type="entry name" value="SPORE GERMINATION PROTEIN"/>
    <property type="match status" value="1"/>
</dbReference>
<dbReference type="Pfam" id="PF13519">
    <property type="entry name" value="VWA_2"/>
    <property type="match status" value="1"/>
</dbReference>
<dbReference type="SMART" id="SM00327">
    <property type="entry name" value="VWA"/>
    <property type="match status" value="1"/>
</dbReference>
<dbReference type="SUPFAM" id="SSF53300">
    <property type="entry name" value="vWA-like"/>
    <property type="match status" value="1"/>
</dbReference>
<dbReference type="PROSITE" id="PS50234">
    <property type="entry name" value="VWFA"/>
    <property type="match status" value="1"/>
</dbReference>
<sequence>MSLPFLGPMSLSGFEHSWFFLFLLVVAGLAALYILMQLARQRRMLRFANMELLESVAPKRPSTWRHLPAILLVASLVLFTIAMAGPTNDVRIPRNRAVVMLVIDVSQSMRATDVAPNRMAAAQEAAKQFADELTPGINLGLIAYAGTATVLVSPTTNREATKNALDKLQFADRTATGEGIFTALQAIATVGAVIGGGDKPPPARIVLFSDGKETMPTNPDNPKGAFTAARTAKDQGVPISTISFGTPYGFVEINDQRQPVPVDDETLKKVAQLSGGNAYNAASLQELKSVYATLQQQIGYETIKGDASVGWVRLGALVLALAALTALLINRRLPT</sequence>
<name>Y1207_MYCPA</name>
<keyword id="KW-1003">Cell membrane</keyword>
<keyword id="KW-0472">Membrane</keyword>
<keyword id="KW-1185">Reference proteome</keyword>
<keyword id="KW-0812">Transmembrane</keyword>
<keyword id="KW-1133">Transmembrane helix</keyword>
<gene>
    <name type="ordered locus">MAP_1207</name>
</gene>
<evidence type="ECO:0000255" key="1">
    <source>
        <dbReference type="HAMAP-Rule" id="MF_01340"/>
    </source>
</evidence>
<organism>
    <name type="scientific">Mycolicibacterium paratuberculosis (strain ATCC BAA-968 / K-10)</name>
    <name type="common">Mycobacterium paratuberculosis</name>
    <dbReference type="NCBI Taxonomy" id="262316"/>
    <lineage>
        <taxon>Bacteria</taxon>
        <taxon>Bacillati</taxon>
        <taxon>Actinomycetota</taxon>
        <taxon>Actinomycetes</taxon>
        <taxon>Mycobacteriales</taxon>
        <taxon>Mycobacteriaceae</taxon>
        <taxon>Mycobacterium</taxon>
        <taxon>Mycobacterium avium complex (MAC)</taxon>
    </lineage>
</organism>
<comment type="subcellular location">
    <subcellularLocation>
        <location evidence="1">Cell membrane</location>
        <topology evidence="1">Multi-pass membrane protein</topology>
    </subcellularLocation>
</comment>
<comment type="similarity">
    <text evidence="1">Belongs to the UPF0353 family.</text>
</comment>
<proteinExistence type="inferred from homology"/>